<proteinExistence type="inferred from homology"/>
<sequence length="495" mass="51950">MAQVINTNSLSLLTQNNLNKSQSALGTAIERLSSGLRINSAKDDAAGQAIANRFTANIKGLTQASRNANDGISIAQTTEGALNEINNNLQRVRELAVQSANSTNSQSDLDSIQAEITQRLNEIDRVSGQTQFNGVKVLAQDNTLTIQVGANNGETIDIDLKQINSQTLGLDTLNVQKKYDVKSEAVTPSATLSTTALDGAGLKTGTGSTTDTGSIKDGKVYYNSTSKNYYVEVEFTDATDQTNKGGFYKVNVADDGAVTMTAATTKEATTPTGITEVTQVQKPVAAPAAIQAQLTAAHVTGADTAEMVKMSYTDKNGKTIDGGFGVKVGADIYAATKNKDGSFSINTTEYTDKDGNTKTALNQLGGADGKTEVVSIDGKTYNASKAAGHNFKAQPELAEAAAATTENPLAKIDAALAQVDALRSDLGAVQNRFNSAITNLGNTVNNLSSARSRIEDSDYATEVSNMSRAQILQQAGTSVLAQANQVPQNVLSLLR</sequence>
<feature type="initiator methionine" description="Removed">
    <location>
        <position position="1"/>
    </location>
</feature>
<feature type="chain" id="PRO_0000182574" description="Flagellin">
    <location>
        <begin position="2"/>
        <end position="495"/>
    </location>
</feature>
<feature type="sequence conflict" description="In Ref. 1; CAA27128." evidence="1" ref="1">
    <original>N</original>
    <variation>D</variation>
    <location>
        <position position="152"/>
    </location>
</feature>
<feature type="sequence conflict" description="In Ref. 1; CAA27128." evidence="1" ref="1">
    <location>
        <position position="185"/>
    </location>
</feature>
<feature type="sequence conflict" description="In Ref. 1; CAA27128." evidence="1" ref="1">
    <original>L</original>
    <variation>V</variation>
    <location>
        <position position="422"/>
    </location>
</feature>
<protein>
    <recommendedName>
        <fullName>Flagellin</fullName>
    </recommendedName>
    <alternativeName>
        <fullName>Phase 1-A flagellin</fullName>
    </alternativeName>
</protein>
<reference key="1">
    <citation type="journal article" date="1985" name="J. Mol. Biol.">
        <title>Covalent structure of three phase-1 flagellar filament proteins of Salmonella.</title>
        <authorList>
            <person name="Wei L.-N."/>
            <person name="Joys T.M."/>
        </authorList>
    </citation>
    <scope>NUCLEOTIDE SEQUENCE [GENOMIC DNA]</scope>
    <source>
        <strain>ATCC 9150 / SARB42</strain>
    </source>
</reference>
<reference key="2">
    <citation type="journal article" date="2004" name="Nat. Genet.">
        <title>Comparison of genome degradation in Paratyphi A and Typhi, human-restricted serovars of Salmonella enterica that cause typhoid.</title>
        <authorList>
            <person name="McClelland M."/>
            <person name="Sanderson K.E."/>
            <person name="Clifton S.W."/>
            <person name="Latreille P."/>
            <person name="Porwollik S."/>
            <person name="Sabo A."/>
            <person name="Meyer R."/>
            <person name="Bieri T."/>
            <person name="Ozersky P."/>
            <person name="McLellan M."/>
            <person name="Harkins C.R."/>
            <person name="Wang C."/>
            <person name="Nguyen C."/>
            <person name="Berghoff A."/>
            <person name="Elliott G."/>
            <person name="Kohlberg S."/>
            <person name="Strong C."/>
            <person name="Du F."/>
            <person name="Carter J."/>
            <person name="Kremizki C."/>
            <person name="Layman D."/>
            <person name="Leonard S."/>
            <person name="Sun H."/>
            <person name="Fulton L."/>
            <person name="Nash W."/>
            <person name="Miner T."/>
            <person name="Minx P."/>
            <person name="Delehaunty K."/>
            <person name="Fronick C."/>
            <person name="Magrini V."/>
            <person name="Nhan M."/>
            <person name="Warren W."/>
            <person name="Florea L."/>
            <person name="Spieth J."/>
            <person name="Wilson R.K."/>
        </authorList>
    </citation>
    <scope>NUCLEOTIDE SEQUENCE [LARGE SCALE GENOMIC DNA]</scope>
    <source>
        <strain>ATCC 9150 / SARB42</strain>
    </source>
</reference>
<comment type="function">
    <text>Flagellin is the subunit protein which polymerizes to form the filaments of bacterial flagella.</text>
</comment>
<comment type="subcellular location">
    <subcellularLocation>
        <location>Secreted</location>
    </subcellularLocation>
    <subcellularLocation>
        <location>Bacterial flagellum</location>
    </subcellularLocation>
</comment>
<comment type="miscellaneous">
    <text>Individual Salmonella serotypes usually alternate between the production of 2 antigenic forms of flagella, termed phase 1 and phase 2, each specified by separate structural genes.</text>
</comment>
<comment type="similarity">
    <text evidence="1">Belongs to the bacterial flagellin family.</text>
</comment>
<comment type="sequence caution" evidence="1">
    <conflict type="erroneous initiation">
        <sequence resource="EMBL-CDS" id="CAA27128"/>
    </conflict>
</comment>
<keyword id="KW-0975">Bacterial flagellum</keyword>
<keyword id="KW-0964">Secreted</keyword>
<name>FLIC_SALPA</name>
<accession>P06178</accession>
<accession>Q5PI02</accession>
<organism>
    <name type="scientific">Salmonella paratyphi A (strain ATCC 9150 / SARB42)</name>
    <dbReference type="NCBI Taxonomy" id="295319"/>
    <lineage>
        <taxon>Bacteria</taxon>
        <taxon>Pseudomonadati</taxon>
        <taxon>Pseudomonadota</taxon>
        <taxon>Gammaproteobacteria</taxon>
        <taxon>Enterobacterales</taxon>
        <taxon>Enterobacteriaceae</taxon>
        <taxon>Salmonella</taxon>
    </lineage>
</organism>
<evidence type="ECO:0000305" key="1"/>
<dbReference type="EMBL" id="X03393">
    <property type="protein sequence ID" value="CAA27128.1"/>
    <property type="status" value="ALT_INIT"/>
    <property type="molecule type" value="Genomic_DNA"/>
</dbReference>
<dbReference type="EMBL" id="CP000026">
    <property type="protein sequence ID" value="AAV76891.1"/>
    <property type="molecule type" value="Genomic_DNA"/>
</dbReference>
<dbReference type="RefSeq" id="WP_000079811.1">
    <property type="nucleotide sequence ID" value="NC_006511.1"/>
</dbReference>
<dbReference type="SMR" id="P06178"/>
<dbReference type="KEGG" id="spt:SPA0911"/>
<dbReference type="HOGENOM" id="CLU_011142_7_2_6"/>
<dbReference type="Proteomes" id="UP000008185">
    <property type="component" value="Chromosome"/>
</dbReference>
<dbReference type="GO" id="GO:0009288">
    <property type="term" value="C:bacterial-type flagellum"/>
    <property type="evidence" value="ECO:0007669"/>
    <property type="project" value="UniProtKB-SubCell"/>
</dbReference>
<dbReference type="GO" id="GO:0005576">
    <property type="term" value="C:extracellular region"/>
    <property type="evidence" value="ECO:0007669"/>
    <property type="project" value="UniProtKB-SubCell"/>
</dbReference>
<dbReference type="GO" id="GO:0005198">
    <property type="term" value="F:structural molecule activity"/>
    <property type="evidence" value="ECO:0007669"/>
    <property type="project" value="InterPro"/>
</dbReference>
<dbReference type="Gene3D" id="6.10.280.190">
    <property type="match status" value="1"/>
</dbReference>
<dbReference type="Gene3D" id="2.30.220.10">
    <property type="entry name" value="f41 fragment of flagellin, C-terminal domain"/>
    <property type="match status" value="1"/>
</dbReference>
<dbReference type="Gene3D" id="2.170.280.10">
    <property type="entry name" value="f41 fragment of flagellin, middle domain"/>
    <property type="match status" value="1"/>
</dbReference>
<dbReference type="Gene3D" id="1.20.1330.10">
    <property type="entry name" value="f41 fragment of flagellin, N-terminal domain"/>
    <property type="match status" value="1"/>
</dbReference>
<dbReference type="Gene3D" id="6.10.10.10">
    <property type="entry name" value="Flagellar export chaperone, C-terminal domain"/>
    <property type="match status" value="1"/>
</dbReference>
<dbReference type="InterPro" id="IPR001492">
    <property type="entry name" value="Flagellin"/>
</dbReference>
<dbReference type="InterPro" id="IPR046358">
    <property type="entry name" value="Flagellin_C"/>
</dbReference>
<dbReference type="InterPro" id="IPR042187">
    <property type="entry name" value="Flagellin_C_sub2"/>
</dbReference>
<dbReference type="InterPro" id="IPR014981">
    <property type="entry name" value="Flagellin_D3"/>
</dbReference>
<dbReference type="InterPro" id="IPR001029">
    <property type="entry name" value="Flagellin_N"/>
</dbReference>
<dbReference type="InterPro" id="IPR049365">
    <property type="entry name" value="FLIC_barrel"/>
</dbReference>
<dbReference type="NCBIfam" id="NF005953">
    <property type="entry name" value="PRK08026.1"/>
    <property type="match status" value="1"/>
</dbReference>
<dbReference type="PANTHER" id="PTHR42792">
    <property type="entry name" value="FLAGELLIN"/>
    <property type="match status" value="1"/>
</dbReference>
<dbReference type="PANTHER" id="PTHR42792:SF2">
    <property type="entry name" value="FLAGELLIN"/>
    <property type="match status" value="1"/>
</dbReference>
<dbReference type="Pfam" id="PF00700">
    <property type="entry name" value="Flagellin_C"/>
    <property type="match status" value="1"/>
</dbReference>
<dbReference type="Pfam" id="PF08884">
    <property type="entry name" value="Flagellin_D3"/>
    <property type="match status" value="1"/>
</dbReference>
<dbReference type="Pfam" id="PF00669">
    <property type="entry name" value="Flagellin_N"/>
    <property type="match status" value="1"/>
</dbReference>
<dbReference type="Pfam" id="PF21504">
    <property type="entry name" value="FLIC_barrel"/>
    <property type="match status" value="1"/>
</dbReference>
<dbReference type="PRINTS" id="PR00207">
    <property type="entry name" value="FLAGELLIN"/>
</dbReference>
<dbReference type="SUPFAM" id="SSF64518">
    <property type="entry name" value="Phase 1 flagellin"/>
    <property type="match status" value="1"/>
</dbReference>
<gene>
    <name type="primary">fliC</name>
    <name type="synonym">flaF</name>
    <name type="synonym">hag</name>
    <name type="ordered locus">SPA0911</name>
</gene>